<feature type="chain" id="PRO_0000049258" description="Dorsal root ganglia homeobox protein">
    <location>
        <begin position="1"/>
        <end position="263"/>
    </location>
</feature>
<feature type="DNA-binding region" description="Homeobox" evidence="2">
    <location>
        <begin position="33"/>
        <end position="92"/>
    </location>
</feature>
<feature type="region of interest" description="Disordered" evidence="4">
    <location>
        <begin position="88"/>
        <end position="135"/>
    </location>
</feature>
<feature type="region of interest" description="Disordered" evidence="4">
    <location>
        <begin position="219"/>
        <end position="263"/>
    </location>
</feature>
<feature type="short sequence motif" description="OAR" evidence="3">
    <location>
        <begin position="204"/>
        <end position="217"/>
    </location>
</feature>
<feature type="compositionally biased region" description="Basic and acidic residues" evidence="4">
    <location>
        <begin position="89"/>
        <end position="106"/>
    </location>
</feature>
<feature type="compositionally biased region" description="Pro residues" evidence="4">
    <location>
        <begin position="110"/>
        <end position="123"/>
    </location>
</feature>
<feature type="compositionally biased region" description="Polar residues" evidence="4">
    <location>
        <begin position="220"/>
        <end position="235"/>
    </location>
</feature>
<feature type="compositionally biased region" description="Basic and acidic residues" evidence="4">
    <location>
        <begin position="251"/>
        <end position="263"/>
    </location>
</feature>
<gene>
    <name type="primary">Drgx</name>
    <name type="synonym">Drg11</name>
    <name type="synonym">Prrxl1</name>
</gene>
<dbReference type="EMBL" id="U29174">
    <property type="protein sequence ID" value="AAA87203.1"/>
    <property type="molecule type" value="mRNA"/>
</dbReference>
<dbReference type="RefSeq" id="NP_665710.1">
    <property type="nucleotide sequence ID" value="NM_145767.1"/>
</dbReference>
<dbReference type="SMR" id="Q62798"/>
<dbReference type="FunCoup" id="Q62798">
    <property type="interactions" value="114"/>
</dbReference>
<dbReference type="IntAct" id="Q62798">
    <property type="interactions" value="1"/>
</dbReference>
<dbReference type="STRING" id="10116.ENSRNOP00000027186"/>
<dbReference type="PhosphoSitePlus" id="Q62798"/>
<dbReference type="PaxDb" id="10116-ENSRNOP00000027186"/>
<dbReference type="GeneID" id="252880"/>
<dbReference type="KEGG" id="rno:252880"/>
<dbReference type="UCSC" id="RGD:628616">
    <property type="organism name" value="rat"/>
</dbReference>
<dbReference type="AGR" id="RGD:628616"/>
<dbReference type="CTD" id="644168"/>
<dbReference type="RGD" id="628616">
    <property type="gene designation" value="Drgx"/>
</dbReference>
<dbReference type="eggNOG" id="KOG0490">
    <property type="taxonomic scope" value="Eukaryota"/>
</dbReference>
<dbReference type="InParanoid" id="Q62798"/>
<dbReference type="OrthoDB" id="6159439at2759"/>
<dbReference type="PhylomeDB" id="Q62798"/>
<dbReference type="PRO" id="PR:Q62798"/>
<dbReference type="Proteomes" id="UP000002494">
    <property type="component" value="Unplaced"/>
</dbReference>
<dbReference type="GO" id="GO:0005634">
    <property type="term" value="C:nucleus"/>
    <property type="evidence" value="ECO:0007669"/>
    <property type="project" value="UniProtKB-SubCell"/>
</dbReference>
<dbReference type="GO" id="GO:0003677">
    <property type="term" value="F:DNA binding"/>
    <property type="evidence" value="ECO:0000266"/>
    <property type="project" value="RGD"/>
</dbReference>
<dbReference type="GO" id="GO:0000981">
    <property type="term" value="F:DNA-binding transcription factor activity, RNA polymerase II-specific"/>
    <property type="evidence" value="ECO:0000318"/>
    <property type="project" value="GO_Central"/>
</dbReference>
<dbReference type="GO" id="GO:0000977">
    <property type="term" value="F:RNA polymerase II transcription regulatory region sequence-specific DNA binding"/>
    <property type="evidence" value="ECO:0000318"/>
    <property type="project" value="GO_Central"/>
</dbReference>
<dbReference type="GO" id="GO:1990837">
    <property type="term" value="F:sequence-specific double-stranded DNA binding"/>
    <property type="evidence" value="ECO:0000266"/>
    <property type="project" value="RGD"/>
</dbReference>
<dbReference type="GO" id="GO:0007411">
    <property type="term" value="P:axon guidance"/>
    <property type="evidence" value="ECO:0000266"/>
    <property type="project" value="RGD"/>
</dbReference>
<dbReference type="GO" id="GO:0007409">
    <property type="term" value="P:axonogenesis"/>
    <property type="evidence" value="ECO:0000266"/>
    <property type="project" value="RGD"/>
</dbReference>
<dbReference type="GO" id="GO:0009593">
    <property type="term" value="P:detection of chemical stimulus"/>
    <property type="evidence" value="ECO:0000266"/>
    <property type="project" value="RGD"/>
</dbReference>
<dbReference type="GO" id="GO:0016048">
    <property type="term" value="P:detection of temperature stimulus"/>
    <property type="evidence" value="ECO:0000266"/>
    <property type="project" value="RGD"/>
</dbReference>
<dbReference type="GO" id="GO:0021516">
    <property type="term" value="P:dorsal spinal cord development"/>
    <property type="evidence" value="ECO:0000266"/>
    <property type="project" value="RGD"/>
</dbReference>
<dbReference type="GO" id="GO:0007399">
    <property type="term" value="P:nervous system development"/>
    <property type="evidence" value="ECO:0000266"/>
    <property type="project" value="RGD"/>
</dbReference>
<dbReference type="GO" id="GO:0030182">
    <property type="term" value="P:neuron differentiation"/>
    <property type="evidence" value="ECO:0000266"/>
    <property type="project" value="RGD"/>
</dbReference>
<dbReference type="GO" id="GO:0001764">
    <property type="term" value="P:neuron migration"/>
    <property type="evidence" value="ECO:0000266"/>
    <property type="project" value="RGD"/>
</dbReference>
<dbReference type="GO" id="GO:0006357">
    <property type="term" value="P:regulation of transcription by RNA polymerase II"/>
    <property type="evidence" value="ECO:0000318"/>
    <property type="project" value="GO_Central"/>
</dbReference>
<dbReference type="GO" id="GO:0050954">
    <property type="term" value="P:sensory perception of mechanical stimulus"/>
    <property type="evidence" value="ECO:0000266"/>
    <property type="project" value="RGD"/>
</dbReference>
<dbReference type="GO" id="GO:0021559">
    <property type="term" value="P:trigeminal nerve development"/>
    <property type="evidence" value="ECO:0000266"/>
    <property type="project" value="RGD"/>
</dbReference>
<dbReference type="CDD" id="cd00086">
    <property type="entry name" value="homeodomain"/>
    <property type="match status" value="1"/>
</dbReference>
<dbReference type="FunFam" id="1.10.10.60:FF:000126">
    <property type="entry name" value="dorsal root ganglia homeobox protein-like"/>
    <property type="match status" value="1"/>
</dbReference>
<dbReference type="Gene3D" id="1.10.10.60">
    <property type="entry name" value="Homeodomain-like"/>
    <property type="match status" value="1"/>
</dbReference>
<dbReference type="InterPro" id="IPR001356">
    <property type="entry name" value="HD"/>
</dbReference>
<dbReference type="InterPro" id="IPR017970">
    <property type="entry name" value="Homeobox_CS"/>
</dbReference>
<dbReference type="InterPro" id="IPR009057">
    <property type="entry name" value="Homeodomain-like_sf"/>
</dbReference>
<dbReference type="InterPro" id="IPR003654">
    <property type="entry name" value="OAR_dom"/>
</dbReference>
<dbReference type="InterPro" id="IPR050649">
    <property type="entry name" value="Paired_Homeobox_TFs"/>
</dbReference>
<dbReference type="PANTHER" id="PTHR24329:SF542">
    <property type="entry name" value="DORSAL ROOT GANGLIA HOMEOBOX PROTEIN"/>
    <property type="match status" value="1"/>
</dbReference>
<dbReference type="PANTHER" id="PTHR24329">
    <property type="entry name" value="HOMEOBOX PROTEIN ARISTALESS"/>
    <property type="match status" value="1"/>
</dbReference>
<dbReference type="Pfam" id="PF00046">
    <property type="entry name" value="Homeodomain"/>
    <property type="match status" value="1"/>
</dbReference>
<dbReference type="Pfam" id="PF03826">
    <property type="entry name" value="OAR"/>
    <property type="match status" value="1"/>
</dbReference>
<dbReference type="SMART" id="SM00389">
    <property type="entry name" value="HOX"/>
    <property type="match status" value="1"/>
</dbReference>
<dbReference type="SUPFAM" id="SSF46689">
    <property type="entry name" value="Homeodomain-like"/>
    <property type="match status" value="1"/>
</dbReference>
<dbReference type="PROSITE" id="PS00027">
    <property type="entry name" value="HOMEOBOX_1"/>
    <property type="match status" value="1"/>
</dbReference>
<dbReference type="PROSITE" id="PS50071">
    <property type="entry name" value="HOMEOBOX_2"/>
    <property type="match status" value="1"/>
</dbReference>
<dbReference type="PROSITE" id="PS50803">
    <property type="entry name" value="OAR"/>
    <property type="match status" value="1"/>
</dbReference>
<organism>
    <name type="scientific">Rattus norvegicus</name>
    <name type="common">Rat</name>
    <dbReference type="NCBI Taxonomy" id="10116"/>
    <lineage>
        <taxon>Eukaryota</taxon>
        <taxon>Metazoa</taxon>
        <taxon>Chordata</taxon>
        <taxon>Craniata</taxon>
        <taxon>Vertebrata</taxon>
        <taxon>Euteleostomi</taxon>
        <taxon>Mammalia</taxon>
        <taxon>Eutheria</taxon>
        <taxon>Euarchontoglires</taxon>
        <taxon>Glires</taxon>
        <taxon>Rodentia</taxon>
        <taxon>Myomorpha</taxon>
        <taxon>Muroidea</taxon>
        <taxon>Muridae</taxon>
        <taxon>Murinae</taxon>
        <taxon>Rattus</taxon>
    </lineage>
</organism>
<protein>
    <recommendedName>
        <fullName>Dorsal root ganglia homeobox protein</fullName>
    </recommendedName>
    <alternativeName>
        <fullName>Dorsal root ganglion 11</fullName>
    </alternativeName>
    <alternativeName>
        <fullName>Homeobox protein DRG11</fullName>
    </alternativeName>
    <alternativeName>
        <fullName>Paired-related homeobox protein-like 1</fullName>
    </alternativeName>
</protein>
<proteinExistence type="evidence at transcript level"/>
<keyword id="KW-0217">Developmental protein</keyword>
<keyword id="KW-0238">DNA-binding</keyword>
<keyword id="KW-0371">Homeobox</keyword>
<keyword id="KW-0539">Nucleus</keyword>
<keyword id="KW-1185">Reference proteome</keyword>
<keyword id="KW-0804">Transcription</keyword>
<keyword id="KW-0805">Transcription regulation</keyword>
<comment type="function">
    <text evidence="1">Transcription factor required for the formation of correct projections from nociceptive sensory neurons to the dorsal horn of the spinal cord and normal perception of pain.</text>
</comment>
<comment type="subunit">
    <text evidence="1">Interacts with RGMB.</text>
</comment>
<comment type="subcellular location">
    <subcellularLocation>
        <location evidence="2 3">Nucleus</location>
    </subcellularLocation>
</comment>
<comment type="tissue specificity">
    <text>Expressed in most sensory neurons but not in autonomic neurons. Also expressed in the dorsal horn of the spinal cord.</text>
</comment>
<comment type="developmental stage">
    <text>First detected at 12.5 dpc in the nervous system and in the dorsal root ganglia of the trunk region. By 15.5 dpc, strong expression in trunk and dorsal spinal cord and at 17.5 dpc expression increases in the dorsal horns.</text>
</comment>
<comment type="similarity">
    <text evidence="5">Belongs to the paired homeobox family.</text>
</comment>
<name>DRGX_RAT</name>
<reference key="1">
    <citation type="journal article" date="1995" name="Mol. Cell. Neurosci.">
        <title>Identification by differential RT-PCR of a novel paired homeodomain protein specifically expressed in sensory neurons and a subset of their CNS targets.</title>
        <authorList>
            <person name="Saito T."/>
            <person name="Greenwood A."/>
            <person name="Sun Q."/>
            <person name="Anderson D.J."/>
        </authorList>
    </citation>
    <scope>NUCLEOTIDE SEQUENCE [MRNA]</scope>
    <source>
        <strain>Sprague-Dawley</strain>
        <tissue>Spinal ganglion</tissue>
    </source>
</reference>
<sequence length="263" mass="28621">MFYFHCPPQLEGTAPFGNHSTGDFDDGFLRRKQRRNRTTFALQQLEALEAVFAQTHYPDVFTREELAMKINLTEARVQVWFQNRRAKWRKTERGASDQEPGAKEPMAEVTPPPVRNINSPPPGDQARGKKEALEAQQSLGRTVGPAGPFFPSCLPGTLLNTATYAQALSHVASLKGGPLCSCCVPDPMGLSFLPTYGCQSNRTASVAALRMKAREHSEAVLQSANLLPSTSSSPGPASKQVPPEGSQDKPSPTKEQSEGEKSV</sequence>
<evidence type="ECO:0000250" key="1"/>
<evidence type="ECO:0000255" key="2">
    <source>
        <dbReference type="PROSITE-ProRule" id="PRU00108"/>
    </source>
</evidence>
<evidence type="ECO:0000255" key="3">
    <source>
        <dbReference type="PROSITE-ProRule" id="PRU00138"/>
    </source>
</evidence>
<evidence type="ECO:0000256" key="4">
    <source>
        <dbReference type="SAM" id="MobiDB-lite"/>
    </source>
</evidence>
<evidence type="ECO:0000305" key="5"/>
<accession>Q62798</accession>